<gene>
    <name evidence="1" type="primary">SLX1</name>
    <name type="ORF">PABG_04077</name>
</gene>
<organism>
    <name type="scientific">Paracoccidioides brasiliensis (strain Pb03)</name>
    <dbReference type="NCBI Taxonomy" id="482561"/>
    <lineage>
        <taxon>Eukaryota</taxon>
        <taxon>Fungi</taxon>
        <taxon>Dikarya</taxon>
        <taxon>Ascomycota</taxon>
        <taxon>Pezizomycotina</taxon>
        <taxon>Eurotiomycetes</taxon>
        <taxon>Eurotiomycetidae</taxon>
        <taxon>Onygenales</taxon>
        <taxon>Ajellomycetaceae</taxon>
        <taxon>Paracoccidioides</taxon>
    </lineage>
</organism>
<name>SLX1_PARBP</name>
<sequence>MAPSIQSLSMIHDSQECIKPIPAFYCCYLLRSCVRHASLYIGSTPDPARRLAQHNGDRNGAAKRTLRENLRPWEMVAIVSGFTSRVAALQFEWAWQNTKVSRHADLDGNAIQELGVRICPRTGKGVKGTAKPRTSLTNILANLHLLLRSPYFSKWPVEVRFFSADVHRVWQVWLQRVDGLLNDGIRVVTDFALDGISEVERKELLAGAGRVGTLDVGYNSIKEYVEKSQFLLEDGERINCGVSHLSCLSSHFLKDKDSDSELIPREGTCPACYGKLEWLTMMKEISLRLRGQEEVNRLFRRRRQAGTPKGQGLKSVRGRGRGRGHSEDESDALQVSTGLDIVDLTPCSDDPWTIDCAIGELGGIAHRPGGESSGNDSDATITLEMETPPQRRRRNQNTRTQRLGLQKSATINLSDWDDAEVIE</sequence>
<dbReference type="EC" id="3.1.-.-" evidence="1"/>
<dbReference type="EMBL" id="KN305535">
    <property type="protein sequence ID" value="EEH21861.1"/>
    <property type="molecule type" value="Genomic_DNA"/>
</dbReference>
<dbReference type="SMR" id="C0S8C7"/>
<dbReference type="VEuPathDB" id="FungiDB:PABG_04077"/>
<dbReference type="HOGENOM" id="CLU_030739_1_0_1"/>
<dbReference type="OrthoDB" id="3594at33183"/>
<dbReference type="GO" id="GO:0033557">
    <property type="term" value="C:Slx1-Slx4 complex"/>
    <property type="evidence" value="ECO:0007669"/>
    <property type="project" value="UniProtKB-UniRule"/>
</dbReference>
<dbReference type="GO" id="GO:0017108">
    <property type="term" value="F:5'-flap endonuclease activity"/>
    <property type="evidence" value="ECO:0007669"/>
    <property type="project" value="InterPro"/>
</dbReference>
<dbReference type="GO" id="GO:0008821">
    <property type="term" value="F:crossover junction DNA endonuclease activity"/>
    <property type="evidence" value="ECO:0007669"/>
    <property type="project" value="TreeGrafter"/>
</dbReference>
<dbReference type="GO" id="GO:0000724">
    <property type="term" value="P:double-strand break repair via homologous recombination"/>
    <property type="evidence" value="ECO:0007669"/>
    <property type="project" value="TreeGrafter"/>
</dbReference>
<dbReference type="CDD" id="cd10455">
    <property type="entry name" value="GIY-YIG_SLX1"/>
    <property type="match status" value="1"/>
</dbReference>
<dbReference type="FunFam" id="3.40.1440.10:FF:000006">
    <property type="entry name" value="Structure-specific endonuclease subunit SLX1"/>
    <property type="match status" value="1"/>
</dbReference>
<dbReference type="Gene3D" id="3.40.1440.10">
    <property type="entry name" value="GIY-YIG endonuclease"/>
    <property type="match status" value="1"/>
</dbReference>
<dbReference type="Gene3D" id="3.30.40.10">
    <property type="entry name" value="Zinc/RING finger domain, C3HC4 (zinc finger)"/>
    <property type="match status" value="1"/>
</dbReference>
<dbReference type="HAMAP" id="MF_03100">
    <property type="entry name" value="Endonuc_su_Slx1"/>
    <property type="match status" value="1"/>
</dbReference>
<dbReference type="InterPro" id="IPR000305">
    <property type="entry name" value="GIY-YIG_endonuc"/>
</dbReference>
<dbReference type="InterPro" id="IPR035901">
    <property type="entry name" value="GIY-YIG_endonuc_sf"/>
</dbReference>
<dbReference type="InterPro" id="IPR027520">
    <property type="entry name" value="Slx1"/>
</dbReference>
<dbReference type="InterPro" id="IPR048749">
    <property type="entry name" value="SLX1_C"/>
</dbReference>
<dbReference type="InterPro" id="IPR050381">
    <property type="entry name" value="SLX1_endonuclease"/>
</dbReference>
<dbReference type="InterPro" id="IPR013083">
    <property type="entry name" value="Znf_RING/FYVE/PHD"/>
</dbReference>
<dbReference type="PANTHER" id="PTHR20208">
    <property type="entry name" value="STRUCTURE-SPECIFIC ENDONUCLEASE SUBUNIT SLX1"/>
    <property type="match status" value="1"/>
</dbReference>
<dbReference type="PANTHER" id="PTHR20208:SF10">
    <property type="entry name" value="STRUCTURE-SPECIFIC ENDONUCLEASE SUBUNIT SLX1"/>
    <property type="match status" value="1"/>
</dbReference>
<dbReference type="Pfam" id="PF01541">
    <property type="entry name" value="GIY-YIG"/>
    <property type="match status" value="1"/>
</dbReference>
<dbReference type="Pfam" id="PF21202">
    <property type="entry name" value="SLX1_C"/>
    <property type="match status" value="1"/>
</dbReference>
<dbReference type="SUPFAM" id="SSF82771">
    <property type="entry name" value="GIY-YIG endonuclease"/>
    <property type="match status" value="1"/>
</dbReference>
<dbReference type="PROSITE" id="PS50164">
    <property type="entry name" value="GIY_YIG"/>
    <property type="match status" value="1"/>
</dbReference>
<proteinExistence type="inferred from homology"/>
<evidence type="ECO:0000255" key="1">
    <source>
        <dbReference type="HAMAP-Rule" id="MF_03100"/>
    </source>
</evidence>
<evidence type="ECO:0000256" key="2">
    <source>
        <dbReference type="SAM" id="MobiDB-lite"/>
    </source>
</evidence>
<comment type="function">
    <text evidence="1">Catalytic subunit of the SLX1-SLX4 structure-specific endonuclease that resolves DNA secondary structures generated during DNA repair and recombination. Has endonuclease activity towards branched DNA substrates, introducing single-strand cuts in duplex DNA close to junctions with ss-DNA.</text>
</comment>
<comment type="cofactor">
    <cofactor evidence="1">
        <name>a divalent metal cation</name>
        <dbReference type="ChEBI" id="CHEBI:60240"/>
    </cofactor>
</comment>
<comment type="subunit">
    <text evidence="1">Forms a heterodimer with SLX4.</text>
</comment>
<comment type="subcellular location">
    <subcellularLocation>
        <location evidence="1">Nucleus</location>
    </subcellularLocation>
</comment>
<comment type="similarity">
    <text evidence="1">Belongs to the SLX1 family.</text>
</comment>
<reference key="1">
    <citation type="journal article" date="2011" name="PLoS Genet.">
        <title>Comparative genomic analysis of human fungal pathogens causing paracoccidioidomycosis.</title>
        <authorList>
            <person name="Desjardins C.A."/>
            <person name="Champion M.D."/>
            <person name="Holder J.W."/>
            <person name="Muszewska A."/>
            <person name="Goldberg J."/>
            <person name="Bailao A.M."/>
            <person name="Brigido M.M."/>
            <person name="Ferreira M.E."/>
            <person name="Garcia A.M."/>
            <person name="Grynberg M."/>
            <person name="Gujja S."/>
            <person name="Heiman D.I."/>
            <person name="Henn M.R."/>
            <person name="Kodira C.D."/>
            <person name="Leon-Narvaez H."/>
            <person name="Longo L.V.G."/>
            <person name="Ma L.-J."/>
            <person name="Malavazi I."/>
            <person name="Matsuo A.L."/>
            <person name="Morais F.V."/>
            <person name="Pereira M."/>
            <person name="Rodriguez-Brito S."/>
            <person name="Sakthikumar S."/>
            <person name="Salem-Izacc S.M."/>
            <person name="Sykes S.M."/>
            <person name="Teixeira M.M."/>
            <person name="Vallejo M.C."/>
            <person name="Walter M.E."/>
            <person name="Yandava C."/>
            <person name="Young S."/>
            <person name="Zeng Q."/>
            <person name="Zucker J."/>
            <person name="Felipe M.S."/>
            <person name="Goldman G.H."/>
            <person name="Haas B.J."/>
            <person name="McEwen J.G."/>
            <person name="Nino-Vega G."/>
            <person name="Puccia R."/>
            <person name="San-Blas G."/>
            <person name="Soares C.M."/>
            <person name="Birren B.W."/>
            <person name="Cuomo C.A."/>
        </authorList>
    </citation>
    <scope>NUCLEOTIDE SEQUENCE [LARGE SCALE GENOMIC DNA]</scope>
    <source>
        <strain>Pb03</strain>
    </source>
</reference>
<keyword id="KW-0227">DNA damage</keyword>
<keyword id="KW-0233">DNA recombination</keyword>
<keyword id="KW-0234">DNA repair</keyword>
<keyword id="KW-0255">Endonuclease</keyword>
<keyword id="KW-0378">Hydrolase</keyword>
<keyword id="KW-0540">Nuclease</keyword>
<keyword id="KW-0539">Nucleus</keyword>
<feature type="chain" id="PRO_0000383789" description="Structure-specific endonuclease subunit SLX1">
    <location>
        <begin position="1"/>
        <end position="423"/>
    </location>
</feature>
<feature type="domain" description="GIY-YIG" evidence="1">
    <location>
        <begin position="23"/>
        <end position="105"/>
    </location>
</feature>
<feature type="region of interest" description="Disordered" evidence="2">
    <location>
        <begin position="300"/>
        <end position="334"/>
    </location>
</feature>
<feature type="region of interest" description="Disordered" evidence="2">
    <location>
        <begin position="365"/>
        <end position="406"/>
    </location>
</feature>
<protein>
    <recommendedName>
        <fullName evidence="1">Structure-specific endonuclease subunit SLX1</fullName>
        <ecNumber evidence="1">3.1.-.-</ecNumber>
    </recommendedName>
</protein>
<accession>C0S8C7</accession>